<name>RISB_BORPA</name>
<reference key="1">
    <citation type="journal article" date="2003" name="Nat. Genet.">
        <title>Comparative analysis of the genome sequences of Bordetella pertussis, Bordetella parapertussis and Bordetella bronchiseptica.</title>
        <authorList>
            <person name="Parkhill J."/>
            <person name="Sebaihia M."/>
            <person name="Preston A."/>
            <person name="Murphy L.D."/>
            <person name="Thomson N.R."/>
            <person name="Harris D.E."/>
            <person name="Holden M.T.G."/>
            <person name="Churcher C.M."/>
            <person name="Bentley S.D."/>
            <person name="Mungall K.L."/>
            <person name="Cerdeno-Tarraga A.-M."/>
            <person name="Temple L."/>
            <person name="James K.D."/>
            <person name="Harris B."/>
            <person name="Quail M.A."/>
            <person name="Achtman M."/>
            <person name="Atkin R."/>
            <person name="Baker S."/>
            <person name="Basham D."/>
            <person name="Bason N."/>
            <person name="Cherevach I."/>
            <person name="Chillingworth T."/>
            <person name="Collins M."/>
            <person name="Cronin A."/>
            <person name="Davis P."/>
            <person name="Doggett J."/>
            <person name="Feltwell T."/>
            <person name="Goble A."/>
            <person name="Hamlin N."/>
            <person name="Hauser H."/>
            <person name="Holroyd S."/>
            <person name="Jagels K."/>
            <person name="Leather S."/>
            <person name="Moule S."/>
            <person name="Norberczak H."/>
            <person name="O'Neil S."/>
            <person name="Ormond D."/>
            <person name="Price C."/>
            <person name="Rabbinowitsch E."/>
            <person name="Rutter S."/>
            <person name="Sanders M."/>
            <person name="Saunders D."/>
            <person name="Seeger K."/>
            <person name="Sharp S."/>
            <person name="Simmonds M."/>
            <person name="Skelton J."/>
            <person name="Squares R."/>
            <person name="Squares S."/>
            <person name="Stevens K."/>
            <person name="Unwin L."/>
            <person name="Whitehead S."/>
            <person name="Barrell B.G."/>
            <person name="Maskell D.J."/>
        </authorList>
    </citation>
    <scope>NUCLEOTIDE SEQUENCE [LARGE SCALE GENOMIC DNA]</scope>
    <source>
        <strain>12822 / ATCC BAA-587 / NCTC 13253</strain>
    </source>
</reference>
<gene>
    <name evidence="1" type="primary">ribH</name>
    <name type="ordered locus">BPP0858</name>
</gene>
<organism>
    <name type="scientific">Bordetella parapertussis (strain 12822 / ATCC BAA-587 / NCTC 13253)</name>
    <dbReference type="NCBI Taxonomy" id="257311"/>
    <lineage>
        <taxon>Bacteria</taxon>
        <taxon>Pseudomonadati</taxon>
        <taxon>Pseudomonadota</taxon>
        <taxon>Betaproteobacteria</taxon>
        <taxon>Burkholderiales</taxon>
        <taxon>Alcaligenaceae</taxon>
        <taxon>Bordetella</taxon>
    </lineage>
</organism>
<protein>
    <recommendedName>
        <fullName evidence="1">6,7-dimethyl-8-ribityllumazine synthase</fullName>
        <shortName evidence="1">DMRL synthase</shortName>
        <shortName evidence="1">LS</shortName>
        <shortName evidence="1">Lumazine synthase</shortName>
        <ecNumber evidence="1">2.5.1.78</ecNumber>
    </recommendedName>
</protein>
<feature type="chain" id="PRO_0000134720" description="6,7-dimethyl-8-ribityllumazine synthase">
    <location>
        <begin position="1"/>
        <end position="175"/>
    </location>
</feature>
<feature type="region of interest" description="Disordered" evidence="2">
    <location>
        <begin position="150"/>
        <end position="175"/>
    </location>
</feature>
<feature type="compositionally biased region" description="Acidic residues" evidence="2">
    <location>
        <begin position="152"/>
        <end position="175"/>
    </location>
</feature>
<feature type="active site" description="Proton donor" evidence="1">
    <location>
        <position position="90"/>
    </location>
</feature>
<feature type="binding site" evidence="1">
    <location>
        <position position="24"/>
    </location>
    <ligand>
        <name>5-amino-6-(D-ribitylamino)uracil</name>
        <dbReference type="ChEBI" id="CHEBI:15934"/>
    </ligand>
</feature>
<feature type="binding site" evidence="1">
    <location>
        <begin position="58"/>
        <end position="60"/>
    </location>
    <ligand>
        <name>5-amino-6-(D-ribitylamino)uracil</name>
        <dbReference type="ChEBI" id="CHEBI:15934"/>
    </ligand>
</feature>
<feature type="binding site" evidence="1">
    <location>
        <begin position="82"/>
        <end position="84"/>
    </location>
    <ligand>
        <name>5-amino-6-(D-ribitylamino)uracil</name>
        <dbReference type="ChEBI" id="CHEBI:15934"/>
    </ligand>
</feature>
<feature type="binding site" evidence="1">
    <location>
        <begin position="87"/>
        <end position="88"/>
    </location>
    <ligand>
        <name>(2S)-2-hydroxy-3-oxobutyl phosphate</name>
        <dbReference type="ChEBI" id="CHEBI:58830"/>
    </ligand>
</feature>
<feature type="binding site" evidence="1">
    <location>
        <position position="115"/>
    </location>
    <ligand>
        <name>5-amino-6-(D-ribitylamino)uracil</name>
        <dbReference type="ChEBI" id="CHEBI:15934"/>
    </ligand>
</feature>
<feature type="binding site" evidence="1">
    <location>
        <position position="129"/>
    </location>
    <ligand>
        <name>(2S)-2-hydroxy-3-oxobutyl phosphate</name>
        <dbReference type="ChEBI" id="CHEBI:58830"/>
    </ligand>
</feature>
<accession>Q7W143</accession>
<sequence>MNPYILTPDLNGEGLHIGIVRARFNEEIGQAQLQACLEELGKLGVDERDVMVVSVPGALELGVALARMAESYEFDALIALGAVIRGETYHFEVVSNESAAAISRIALETGIPVANGVLTVDTDEQAQARAAGKGADCAQVAVEMANLAAALEPEEDDEDEDDEDEDFDDEEDDGR</sequence>
<comment type="function">
    <text evidence="1">Catalyzes the formation of 6,7-dimethyl-8-ribityllumazine by condensation of 5-amino-6-(D-ribitylamino)uracil with 3,4-dihydroxy-2-butanone 4-phosphate. This is the penultimate step in the biosynthesis of riboflavin.</text>
</comment>
<comment type="catalytic activity">
    <reaction evidence="1">
        <text>(2S)-2-hydroxy-3-oxobutyl phosphate + 5-amino-6-(D-ribitylamino)uracil = 6,7-dimethyl-8-(1-D-ribityl)lumazine + phosphate + 2 H2O + H(+)</text>
        <dbReference type="Rhea" id="RHEA:26152"/>
        <dbReference type="ChEBI" id="CHEBI:15377"/>
        <dbReference type="ChEBI" id="CHEBI:15378"/>
        <dbReference type="ChEBI" id="CHEBI:15934"/>
        <dbReference type="ChEBI" id="CHEBI:43474"/>
        <dbReference type="ChEBI" id="CHEBI:58201"/>
        <dbReference type="ChEBI" id="CHEBI:58830"/>
        <dbReference type="EC" id="2.5.1.78"/>
    </reaction>
</comment>
<comment type="pathway">
    <text evidence="1">Cofactor biosynthesis; riboflavin biosynthesis; riboflavin from 2-hydroxy-3-oxobutyl phosphate and 5-amino-6-(D-ribitylamino)uracil: step 1/2.</text>
</comment>
<comment type="similarity">
    <text evidence="1">Belongs to the DMRL synthase family.</text>
</comment>
<keyword id="KW-0686">Riboflavin biosynthesis</keyword>
<keyword id="KW-0808">Transferase</keyword>
<evidence type="ECO:0000255" key="1">
    <source>
        <dbReference type="HAMAP-Rule" id="MF_00178"/>
    </source>
</evidence>
<evidence type="ECO:0000256" key="2">
    <source>
        <dbReference type="SAM" id="MobiDB-lite"/>
    </source>
</evidence>
<dbReference type="EC" id="2.5.1.78" evidence="1"/>
<dbReference type="EMBL" id="BX640425">
    <property type="protein sequence ID" value="CAE40267.1"/>
    <property type="molecule type" value="Genomic_DNA"/>
</dbReference>
<dbReference type="RefSeq" id="WP_003808598.1">
    <property type="nucleotide sequence ID" value="NC_002928.3"/>
</dbReference>
<dbReference type="SMR" id="Q7W143"/>
<dbReference type="GeneID" id="93202608"/>
<dbReference type="KEGG" id="bpa:BPP0858"/>
<dbReference type="HOGENOM" id="CLU_089358_1_2_4"/>
<dbReference type="UniPathway" id="UPA00275">
    <property type="reaction ID" value="UER00404"/>
</dbReference>
<dbReference type="Proteomes" id="UP000001421">
    <property type="component" value="Chromosome"/>
</dbReference>
<dbReference type="GO" id="GO:0005829">
    <property type="term" value="C:cytosol"/>
    <property type="evidence" value="ECO:0007669"/>
    <property type="project" value="TreeGrafter"/>
</dbReference>
<dbReference type="GO" id="GO:0009349">
    <property type="term" value="C:riboflavin synthase complex"/>
    <property type="evidence" value="ECO:0007669"/>
    <property type="project" value="InterPro"/>
</dbReference>
<dbReference type="GO" id="GO:0000906">
    <property type="term" value="F:6,7-dimethyl-8-ribityllumazine synthase activity"/>
    <property type="evidence" value="ECO:0007669"/>
    <property type="project" value="UniProtKB-UniRule"/>
</dbReference>
<dbReference type="GO" id="GO:0009231">
    <property type="term" value="P:riboflavin biosynthetic process"/>
    <property type="evidence" value="ECO:0007669"/>
    <property type="project" value="UniProtKB-UniRule"/>
</dbReference>
<dbReference type="CDD" id="cd09209">
    <property type="entry name" value="Lumazine_synthase-I"/>
    <property type="match status" value="1"/>
</dbReference>
<dbReference type="Gene3D" id="3.40.50.960">
    <property type="entry name" value="Lumazine/riboflavin synthase"/>
    <property type="match status" value="1"/>
</dbReference>
<dbReference type="HAMAP" id="MF_00178">
    <property type="entry name" value="Lumazine_synth"/>
    <property type="match status" value="1"/>
</dbReference>
<dbReference type="InterPro" id="IPR034964">
    <property type="entry name" value="LS"/>
</dbReference>
<dbReference type="InterPro" id="IPR002180">
    <property type="entry name" value="LS/RS"/>
</dbReference>
<dbReference type="InterPro" id="IPR036467">
    <property type="entry name" value="LS/RS_sf"/>
</dbReference>
<dbReference type="NCBIfam" id="TIGR00114">
    <property type="entry name" value="lumazine-synth"/>
    <property type="match status" value="1"/>
</dbReference>
<dbReference type="PANTHER" id="PTHR21058:SF0">
    <property type="entry name" value="6,7-DIMETHYL-8-RIBITYLLUMAZINE SYNTHASE"/>
    <property type="match status" value="1"/>
</dbReference>
<dbReference type="PANTHER" id="PTHR21058">
    <property type="entry name" value="6,7-DIMETHYL-8-RIBITYLLUMAZINE SYNTHASE DMRL SYNTHASE LUMAZINE SYNTHASE"/>
    <property type="match status" value="1"/>
</dbReference>
<dbReference type="Pfam" id="PF00885">
    <property type="entry name" value="DMRL_synthase"/>
    <property type="match status" value="1"/>
</dbReference>
<dbReference type="SUPFAM" id="SSF52121">
    <property type="entry name" value="Lumazine synthase"/>
    <property type="match status" value="1"/>
</dbReference>
<proteinExistence type="inferred from homology"/>